<gene>
    <name evidence="2" type="primary">psbD</name>
    <name type="ordered locus">LOC_Osp1g00170</name>
    <name type="ORF">Nip018</name>
</gene>
<sequence length="353" mass="39573">MTIALGRVTKEENDLFDIMDDWLRRDRFVFVGWSGLLLFPCAYFALGGWFTGTTFVTSWYTHGLASSYLEGCNFLTAAVSTPANSLAHSLLLLWGPEAQGDFTRWCQLGGLWTFVALHGAFALIGFMLRQFELARSVQLRPYNAISFSGPIAVFVSVFLIYPLGQSGWFFAPSFGVAAIFRFILFFQGFHNWTLNPFHMMGVAGVLGAALLCAIHGATVENTLFEDGDGANTFRAFNPTQAEETYSMVTANRFWSQIFGVAFSNKRWLHFFMLFVPVTGLWMSAIGVVGLALNLRAYDFVSQEIRAAEDPEFETFYTKNILLNEGIRAWMAAQDQPHENLIFPEEVLPRGNAL</sequence>
<evidence type="ECO:0000250" key="1">
    <source>
        <dbReference type="UniProtKB" id="P56761"/>
    </source>
</evidence>
<evidence type="ECO:0000255" key="2">
    <source>
        <dbReference type="HAMAP-Rule" id="MF_01383"/>
    </source>
</evidence>
<evidence type="ECO:0000305" key="3"/>
<comment type="function">
    <text evidence="2">Photosystem II (PSII) is a light-driven water:plastoquinone oxidoreductase that uses light energy to abstract electrons from H(2)O, generating O(2) and a proton gradient subsequently used for ATP formation. It consists of a core antenna complex that captures photons, and an electron transfer chain that converts photonic excitation into a charge separation. The D1/D2 (PsbA/PsbD) reaction center heterodimer binds P680, the primary electron donor of PSII as well as several subsequent electron acceptors. D2 is needed for assembly of a stable PSII complex.</text>
</comment>
<comment type="catalytic activity">
    <reaction evidence="2">
        <text>2 a plastoquinone + 4 hnu + 2 H2O = 2 a plastoquinol + O2</text>
        <dbReference type="Rhea" id="RHEA:36359"/>
        <dbReference type="Rhea" id="RHEA-COMP:9561"/>
        <dbReference type="Rhea" id="RHEA-COMP:9562"/>
        <dbReference type="ChEBI" id="CHEBI:15377"/>
        <dbReference type="ChEBI" id="CHEBI:15379"/>
        <dbReference type="ChEBI" id="CHEBI:17757"/>
        <dbReference type="ChEBI" id="CHEBI:30212"/>
        <dbReference type="ChEBI" id="CHEBI:62192"/>
        <dbReference type="EC" id="1.10.3.9"/>
    </reaction>
</comment>
<comment type="cofactor">
    <text evidence="2">The D1/D2 heterodimer binds P680, chlorophylls that are the primary electron donor of PSII, and subsequent electron acceptors. It shares a non-heme iron and each subunit binds pheophytin, quinone, additional chlorophylls, carotenoids and lipids. There is also a Cl(-1) ion associated with D1 and D2, which is required for oxygen evolution. The PSII complex binds additional chlorophylls, carotenoids and specific lipids.</text>
</comment>
<comment type="subunit">
    <text evidence="2">PSII is composed of 1 copy each of membrane proteins PsbA, PsbB, PsbC, PsbD, PsbE, PsbF, PsbH, PsbI, PsbJ, PsbK, PsbL, PsbM, PsbT, PsbX, PsbY, PsbZ, Psb30/Ycf12, at least 3 peripheral proteins of the oxygen-evolving complex and a large number of cofactors. It forms dimeric complexes.</text>
</comment>
<comment type="subcellular location">
    <subcellularLocation>
        <location evidence="2">Plastid</location>
        <location evidence="2">Chloroplast thylakoid membrane</location>
        <topology evidence="2">Multi-pass membrane protein</topology>
    </subcellularLocation>
</comment>
<comment type="miscellaneous">
    <text evidence="2">2 of the reaction center chlorophylls (ChlD1 and ChlD2) are entirely coordinated by water.</text>
</comment>
<comment type="similarity">
    <text evidence="2">Belongs to the reaction center PufL/M/PsbA/D family.</text>
</comment>
<comment type="sequence caution" evidence="3">
    <conflict type="erroneous initiation">
        <sequence resource="EMBL-CDS" id="AAS46108"/>
    </conflict>
    <text>Extended N-terminus.</text>
</comment>
<feature type="initiator methionine" description="Removed" evidence="1">
    <location>
        <position position="1"/>
    </location>
</feature>
<feature type="chain" id="PRO_0000290040" description="Photosystem II D2 protein">
    <location>
        <begin position="2"/>
        <end position="353"/>
    </location>
</feature>
<feature type="transmembrane region" description="Helical" evidence="2">
    <location>
        <begin position="41"/>
        <end position="61"/>
    </location>
</feature>
<feature type="transmembrane region" description="Helical" evidence="2">
    <location>
        <begin position="125"/>
        <end position="141"/>
    </location>
</feature>
<feature type="transmembrane region" description="Helical" evidence="2">
    <location>
        <begin position="153"/>
        <end position="166"/>
    </location>
</feature>
<feature type="transmembrane region" description="Helical" evidence="2">
    <location>
        <begin position="208"/>
        <end position="228"/>
    </location>
</feature>
<feature type="transmembrane region" description="Helical" evidence="2">
    <location>
        <begin position="279"/>
        <end position="295"/>
    </location>
</feature>
<feature type="binding site" description="axial binding residue" evidence="2">
    <location>
        <position position="118"/>
    </location>
    <ligand>
        <name>chlorophyll a</name>
        <dbReference type="ChEBI" id="CHEBI:58416"/>
        <label>ChlzD2</label>
    </ligand>
    <ligandPart>
        <name>Mg</name>
        <dbReference type="ChEBI" id="CHEBI:25107"/>
    </ligandPart>
</feature>
<feature type="binding site" evidence="2">
    <location>
        <position position="130"/>
    </location>
    <ligand>
        <name>pheophytin a</name>
        <dbReference type="ChEBI" id="CHEBI:136840"/>
        <label>D2</label>
    </ligand>
</feature>
<feature type="binding site" evidence="2">
    <location>
        <position position="143"/>
    </location>
    <ligand>
        <name>pheophytin a</name>
        <dbReference type="ChEBI" id="CHEBI:136840"/>
        <label>D2</label>
    </ligand>
</feature>
<feature type="binding site" description="axial binding residue" evidence="2">
    <location>
        <position position="198"/>
    </location>
    <ligand>
        <name>chlorophyll a</name>
        <dbReference type="ChEBI" id="CHEBI:58416"/>
        <label>PD2</label>
    </ligand>
    <ligandPart>
        <name>Mg</name>
        <dbReference type="ChEBI" id="CHEBI:25107"/>
    </ligandPart>
</feature>
<feature type="binding site" evidence="2">
    <location>
        <position position="215"/>
    </location>
    <ligand>
        <name>a plastoquinone</name>
        <dbReference type="ChEBI" id="CHEBI:17757"/>
        <label>Q(A)</label>
    </ligand>
</feature>
<feature type="binding site" evidence="2">
    <location>
        <position position="215"/>
    </location>
    <ligand>
        <name>Fe cation</name>
        <dbReference type="ChEBI" id="CHEBI:24875"/>
        <note>ligand shared with heterodimeric partner</note>
    </ligand>
</feature>
<feature type="binding site" evidence="2">
    <location>
        <position position="262"/>
    </location>
    <ligand>
        <name>a plastoquinone</name>
        <dbReference type="ChEBI" id="CHEBI:17757"/>
        <label>Q(A)</label>
    </ligand>
</feature>
<feature type="binding site" evidence="2">
    <location>
        <position position="269"/>
    </location>
    <ligand>
        <name>Fe cation</name>
        <dbReference type="ChEBI" id="CHEBI:24875"/>
        <note>ligand shared with heterodimeric partner</note>
    </ligand>
</feature>
<feature type="modified residue" description="N-acetylthreonine" evidence="1">
    <location>
        <position position="2"/>
    </location>
</feature>
<feature type="modified residue" description="Phosphothreonine" evidence="1">
    <location>
        <position position="2"/>
    </location>
</feature>
<name>PSBD_ORYSJ</name>
<reference key="1">
    <citation type="journal article" date="1989" name="Mol. Gen. Genet.">
        <title>The complete sequence of the rice (Oryza sativa) chloroplast genome: intermolecular recombination between distinct tRNA genes accounts for a major plastid DNA inversion during the evolution of the cereals.</title>
        <authorList>
            <person name="Hiratsuka J."/>
            <person name="Shimada H."/>
            <person name="Whittier R."/>
            <person name="Ishibashi T."/>
            <person name="Sakamoto M."/>
            <person name="Mori M."/>
            <person name="Kondo C."/>
            <person name="Honji Y."/>
            <person name="Sun C.-R."/>
            <person name="Meng B.-Y."/>
            <person name="Li Y.-Q."/>
            <person name="Kanno A."/>
            <person name="Nishizawa Y."/>
            <person name="Hirai A."/>
            <person name="Shinozaki K."/>
            <person name="Sugiura M."/>
        </authorList>
    </citation>
    <scope>NUCLEOTIDE SEQUENCE [LARGE SCALE GENOMIC DNA]</scope>
    <source>
        <strain>cv. Nipponbare</strain>
    </source>
</reference>
<reference key="2">
    <citation type="journal article" date="2004" name="Plant Physiol.">
        <title>A comparison of rice chloroplast genomes.</title>
        <authorList>
            <person name="Tang J."/>
            <person name="Xia H."/>
            <person name="Cao M."/>
            <person name="Zhang X."/>
            <person name="Zeng W."/>
            <person name="Hu S."/>
            <person name="Tong W."/>
            <person name="Wang J."/>
            <person name="Wang J."/>
            <person name="Yu J."/>
            <person name="Yang H."/>
            <person name="Zhu L."/>
        </authorList>
    </citation>
    <scope>NUCLEOTIDE SEQUENCE [LARGE SCALE GENOMIC DNA]</scope>
    <source>
        <strain>cv. Nipponbare</strain>
    </source>
</reference>
<accession>P0C437</accession>
<accession>P12095</accession>
<accession>Q6QY23</accession>
<accession>Q6QY86</accession>
<keyword id="KW-0007">Acetylation</keyword>
<keyword id="KW-0148">Chlorophyll</keyword>
<keyword id="KW-0150">Chloroplast</keyword>
<keyword id="KW-0157">Chromophore</keyword>
<keyword id="KW-0249">Electron transport</keyword>
<keyword id="KW-0408">Iron</keyword>
<keyword id="KW-0460">Magnesium</keyword>
<keyword id="KW-0472">Membrane</keyword>
<keyword id="KW-0479">Metal-binding</keyword>
<keyword id="KW-0560">Oxidoreductase</keyword>
<keyword id="KW-0597">Phosphoprotein</keyword>
<keyword id="KW-0602">Photosynthesis</keyword>
<keyword id="KW-0604">Photosystem II</keyword>
<keyword id="KW-0934">Plastid</keyword>
<keyword id="KW-1185">Reference proteome</keyword>
<keyword id="KW-0793">Thylakoid</keyword>
<keyword id="KW-0812">Transmembrane</keyword>
<keyword id="KW-1133">Transmembrane helix</keyword>
<keyword id="KW-0813">Transport</keyword>
<dbReference type="EC" id="1.10.3.9" evidence="2"/>
<dbReference type="EMBL" id="X15901">
    <property type="protein sequence ID" value="CAA34013.1"/>
    <property type="molecule type" value="Genomic_DNA"/>
</dbReference>
<dbReference type="EMBL" id="AY522330">
    <property type="protein sequence ID" value="AAS46108.1"/>
    <property type="status" value="ALT_INIT"/>
    <property type="molecule type" value="Genomic_DNA"/>
</dbReference>
<dbReference type="PIR" id="JQ0206">
    <property type="entry name" value="F2RZD2"/>
</dbReference>
<dbReference type="RefSeq" id="NP_039366.1">
    <property type="nucleotide sequence ID" value="NC_001320.1"/>
</dbReference>
<dbReference type="SMR" id="P0C437"/>
<dbReference type="FunCoup" id="P0C437">
    <property type="interactions" value="401"/>
</dbReference>
<dbReference type="STRING" id="39947.P0C437"/>
<dbReference type="PaxDb" id="39947-P0C437"/>
<dbReference type="EnsemblPlants" id="transcript-psbD">
    <property type="protein sequence ID" value="cds-CAA34013.1"/>
    <property type="gene ID" value="gene-psbD"/>
</dbReference>
<dbReference type="GeneID" id="3131412"/>
<dbReference type="Gramene" id="transcript-psbD">
    <property type="protein sequence ID" value="cds-CAA34013.1"/>
    <property type="gene ID" value="gene-psbD"/>
</dbReference>
<dbReference type="KEGG" id="dosa:psbD"/>
<dbReference type="KEGG" id="osa:3131412"/>
<dbReference type="InParanoid" id="P0C437"/>
<dbReference type="OrthoDB" id="34776at2759"/>
<dbReference type="Proteomes" id="UP000059680">
    <property type="component" value="Chloroplast"/>
</dbReference>
<dbReference type="GO" id="GO:0009535">
    <property type="term" value="C:chloroplast thylakoid membrane"/>
    <property type="evidence" value="ECO:0007669"/>
    <property type="project" value="UniProtKB-SubCell"/>
</dbReference>
<dbReference type="GO" id="GO:0009523">
    <property type="term" value="C:photosystem II"/>
    <property type="evidence" value="ECO:0000318"/>
    <property type="project" value="GO_Central"/>
</dbReference>
<dbReference type="GO" id="GO:0009536">
    <property type="term" value="C:plastid"/>
    <property type="evidence" value="ECO:0000305"/>
    <property type="project" value="Gramene"/>
</dbReference>
<dbReference type="GO" id="GO:0016168">
    <property type="term" value="F:chlorophyll binding"/>
    <property type="evidence" value="ECO:0007669"/>
    <property type="project" value="UniProtKB-UniRule"/>
</dbReference>
<dbReference type="GO" id="GO:0045156">
    <property type="term" value="F:electron transporter, transferring electrons within the cyclic electron transport pathway of photosynthesis activity"/>
    <property type="evidence" value="ECO:0007669"/>
    <property type="project" value="InterPro"/>
</dbReference>
<dbReference type="GO" id="GO:0005506">
    <property type="term" value="F:iron ion binding"/>
    <property type="evidence" value="ECO:0007669"/>
    <property type="project" value="UniProtKB-UniRule"/>
</dbReference>
<dbReference type="GO" id="GO:0010242">
    <property type="term" value="F:oxygen evolving activity"/>
    <property type="evidence" value="ECO:0007669"/>
    <property type="project" value="UniProtKB-EC"/>
</dbReference>
<dbReference type="GO" id="GO:0009772">
    <property type="term" value="P:photosynthetic electron transport in photosystem II"/>
    <property type="evidence" value="ECO:0007669"/>
    <property type="project" value="InterPro"/>
</dbReference>
<dbReference type="CDD" id="cd09288">
    <property type="entry name" value="Photosystem-II_D2"/>
    <property type="match status" value="1"/>
</dbReference>
<dbReference type="FunFam" id="1.20.85.10:FF:000001">
    <property type="entry name" value="photosystem II D2 protein-like"/>
    <property type="match status" value="1"/>
</dbReference>
<dbReference type="Gene3D" id="1.20.85.10">
    <property type="entry name" value="Photosystem II protein D1-like"/>
    <property type="match status" value="1"/>
</dbReference>
<dbReference type="HAMAP" id="MF_01383">
    <property type="entry name" value="PSII_PsbD_D2"/>
    <property type="match status" value="1"/>
</dbReference>
<dbReference type="InterPro" id="IPR055266">
    <property type="entry name" value="D1/D2"/>
</dbReference>
<dbReference type="InterPro" id="IPR036854">
    <property type="entry name" value="Photo_II_D1/D2_sf"/>
</dbReference>
<dbReference type="InterPro" id="IPR000484">
    <property type="entry name" value="Photo_RC_L/M"/>
</dbReference>
<dbReference type="InterPro" id="IPR055265">
    <property type="entry name" value="Photo_RC_L/M_CS"/>
</dbReference>
<dbReference type="InterPro" id="IPR005868">
    <property type="entry name" value="PSII_PsbD/D2"/>
</dbReference>
<dbReference type="NCBIfam" id="TIGR01152">
    <property type="entry name" value="psbD"/>
    <property type="match status" value="1"/>
</dbReference>
<dbReference type="PANTHER" id="PTHR33149:SF12">
    <property type="entry name" value="PHOTOSYSTEM II D2 PROTEIN"/>
    <property type="match status" value="1"/>
</dbReference>
<dbReference type="PANTHER" id="PTHR33149">
    <property type="entry name" value="PHOTOSYSTEM II PROTEIN D1"/>
    <property type="match status" value="1"/>
</dbReference>
<dbReference type="Pfam" id="PF00124">
    <property type="entry name" value="Photo_RC"/>
    <property type="match status" value="1"/>
</dbReference>
<dbReference type="PRINTS" id="PR00256">
    <property type="entry name" value="REACTNCENTRE"/>
</dbReference>
<dbReference type="SUPFAM" id="SSF81483">
    <property type="entry name" value="Bacterial photosystem II reaction centre, L and M subunits"/>
    <property type="match status" value="1"/>
</dbReference>
<dbReference type="PROSITE" id="PS00244">
    <property type="entry name" value="REACTION_CENTER"/>
    <property type="match status" value="1"/>
</dbReference>
<protein>
    <recommendedName>
        <fullName evidence="2">Photosystem II D2 protein</fullName>
        <shortName evidence="2">PSII D2 protein</shortName>
        <ecNumber evidence="2">1.10.3.9</ecNumber>
    </recommendedName>
    <alternativeName>
        <fullName evidence="2">Photosystem Q(A) protein</fullName>
    </alternativeName>
</protein>
<organism>
    <name type="scientific">Oryza sativa subsp. japonica</name>
    <name type="common">Rice</name>
    <dbReference type="NCBI Taxonomy" id="39947"/>
    <lineage>
        <taxon>Eukaryota</taxon>
        <taxon>Viridiplantae</taxon>
        <taxon>Streptophyta</taxon>
        <taxon>Embryophyta</taxon>
        <taxon>Tracheophyta</taxon>
        <taxon>Spermatophyta</taxon>
        <taxon>Magnoliopsida</taxon>
        <taxon>Liliopsida</taxon>
        <taxon>Poales</taxon>
        <taxon>Poaceae</taxon>
        <taxon>BOP clade</taxon>
        <taxon>Oryzoideae</taxon>
        <taxon>Oryzeae</taxon>
        <taxon>Oryzinae</taxon>
        <taxon>Oryza</taxon>
        <taxon>Oryza sativa</taxon>
    </lineage>
</organism>
<proteinExistence type="inferred from homology"/>
<geneLocation type="chloroplast"/>